<keyword id="KW-0472">Membrane</keyword>
<keyword id="KW-0496">Mitochondrion</keyword>
<keyword id="KW-0999">Mitochondrion inner membrane</keyword>
<keyword id="KW-0812">Transmembrane</keyword>
<keyword id="KW-1133">Transmembrane helix</keyword>
<name>COX6C_SAISC</name>
<proteinExistence type="inferred from homology"/>
<dbReference type="EMBL" id="AY236511">
    <property type="protein sequence ID" value="AAP43957.1"/>
    <property type="molecule type" value="mRNA"/>
</dbReference>
<dbReference type="EMBL" id="AY585859">
    <property type="protein sequence ID" value="AAW03187.1"/>
    <property type="molecule type" value="mRNA"/>
</dbReference>
<dbReference type="SMR" id="Q7YRJ9"/>
<dbReference type="UniPathway" id="UPA00705"/>
<dbReference type="GO" id="GO:0005743">
    <property type="term" value="C:mitochondrial inner membrane"/>
    <property type="evidence" value="ECO:0007669"/>
    <property type="project" value="UniProtKB-SubCell"/>
</dbReference>
<dbReference type="GO" id="GO:0006119">
    <property type="term" value="P:oxidative phosphorylation"/>
    <property type="evidence" value="ECO:0007669"/>
    <property type="project" value="UniProtKB-UniPathway"/>
</dbReference>
<dbReference type="CDD" id="cd22901">
    <property type="entry name" value="CcO_VIc"/>
    <property type="match status" value="1"/>
</dbReference>
<dbReference type="FunFam" id="4.10.93.10:FF:000001">
    <property type="entry name" value="Cytochrome c oxidase subunit 6C"/>
    <property type="match status" value="1"/>
</dbReference>
<dbReference type="Gene3D" id="4.10.93.10">
    <property type="entry name" value="Mitochondrial cytochrome c oxidase subunit VIc/VIIs"/>
    <property type="match status" value="1"/>
</dbReference>
<dbReference type="InterPro" id="IPR051389">
    <property type="entry name" value="Cytochrome_c_oxidase_VIc"/>
</dbReference>
<dbReference type="InterPro" id="IPR034884">
    <property type="entry name" value="Cytochrome_c_oxidase_VIc/VIIs"/>
</dbReference>
<dbReference type="InterPro" id="IPR037169">
    <property type="entry name" value="Cytochrome_c_oxidase_VIc_sf"/>
</dbReference>
<dbReference type="PANTHER" id="PTHR48416">
    <property type="entry name" value="CYTOCHROME C OXIDASE SUBUNIT 6C"/>
    <property type="match status" value="1"/>
</dbReference>
<dbReference type="PANTHER" id="PTHR48416:SF1">
    <property type="entry name" value="CYTOCHROME C OXIDASE SUBUNIT 6C"/>
    <property type="match status" value="1"/>
</dbReference>
<dbReference type="Pfam" id="PF02937">
    <property type="entry name" value="COX6C"/>
    <property type="match status" value="1"/>
</dbReference>
<dbReference type="SUPFAM" id="SSF81415">
    <property type="entry name" value="Mitochondrial cytochrome c oxidase subunit VIc"/>
    <property type="match status" value="1"/>
</dbReference>
<sequence length="75" mass="8540">MASEVLAKPQMRGLLARRLRIHMVGAFLISLGVAALYKFGVAEPRKKAYADFYKNYSPEKDFEEMKKAGVFRSIK</sequence>
<accession>Q7YRJ9</accession>
<accession>Q53CG0</accession>
<protein>
    <recommendedName>
        <fullName>Cytochrome c oxidase subunit 6C</fullName>
    </recommendedName>
    <alternativeName>
        <fullName>Cytochrome c oxidase polypeptide VIc</fullName>
    </alternativeName>
</protein>
<organism>
    <name type="scientific">Saimiri sciureus</name>
    <name type="common">Common squirrel monkey</name>
    <dbReference type="NCBI Taxonomy" id="9521"/>
    <lineage>
        <taxon>Eukaryota</taxon>
        <taxon>Metazoa</taxon>
        <taxon>Chordata</taxon>
        <taxon>Craniata</taxon>
        <taxon>Vertebrata</taxon>
        <taxon>Euteleostomi</taxon>
        <taxon>Mammalia</taxon>
        <taxon>Eutheria</taxon>
        <taxon>Euarchontoglires</taxon>
        <taxon>Primates</taxon>
        <taxon>Haplorrhini</taxon>
        <taxon>Platyrrhini</taxon>
        <taxon>Cebidae</taxon>
        <taxon>Saimiriinae</taxon>
        <taxon>Saimiri</taxon>
    </lineage>
</organism>
<comment type="function">
    <text evidence="1">Component of the cytochrome c oxidase, the last enzyme in the mitochondrial electron transport chain which drives oxidative phosphorylation. The respiratory chain contains 3 multisubunit complexes succinate dehydrogenase (complex II, CII), ubiquinol-cytochrome c oxidoreductase (cytochrome b-c1 complex, complex III, CIII) and cytochrome c oxidase (complex IV, CIV), that cooperate to transfer electrons derived from NADH and succinate to molecular oxygen, creating an electrochemical gradient over the inner membrane that drives transmembrane transport and the ATP synthase. Cytochrome c oxidase is the component of the respiratory chain that catalyzes the reduction of oxygen to water. Electrons originating from reduced cytochrome c in the intermembrane space (IMS) are transferred via the dinuclear copper A center (CU(A)) of subunit 2 and heme A of subunit 1 to the active site in subunit 1, a binuclear center (BNC) formed by heme A3 and copper B (CU(B)). The BNC reduces molecular oxygen to 2 water molecules using 4 electrons from cytochrome c in the IMS and 4 protons from the mitochondrial matrix.</text>
</comment>
<comment type="pathway">
    <text evidence="1">Energy metabolism; oxidative phosphorylation.</text>
</comment>
<comment type="subunit">
    <text evidence="1">Component of the cytochrome c oxidase (complex IV, CIV), a multisubunit enzyme composed of 14 subunits. The complex is composed of a catalytic core of 3 subunits MT-CO1, MT-CO2 and MT-CO3, encoded in the mitochondrial DNA, and 11 supernumerary subunits COX4I, COX5A, COX5B, COX6A, COX6B, COX6C, COX7A, COX7B, COX7C, COX8 and NDUFA4, which are encoded in the nuclear genome. The complex exists as a monomer or a dimer and forms supercomplexes (SCs) in the inner mitochondrial membrane with NADH-ubiquinone oxidoreductase (complex I, CI) and ubiquinol-cytochrome c oxidoreductase (cytochrome b-c1 complex, complex III, CIII), resulting in different assemblies (supercomplex SCI(1)III(2)IV(1) and megacomplex MCI(2)III(2)IV(2)).</text>
</comment>
<comment type="subcellular location">
    <subcellularLocation>
        <location evidence="1">Mitochondrion inner membrane</location>
        <topology evidence="1">Single-pass membrane protein</topology>
    </subcellularLocation>
</comment>
<comment type="similarity">
    <text evidence="2">Belongs to the cytochrome c oxidase subunit 6c family.</text>
</comment>
<evidence type="ECO:0000250" key="1">
    <source>
        <dbReference type="UniProtKB" id="P04038"/>
    </source>
</evidence>
<evidence type="ECO:0000305" key="2"/>
<feature type="chain" id="PRO_0000006139" description="Cytochrome c oxidase subunit 6C">
    <location>
        <begin position="1"/>
        <end position="75"/>
    </location>
</feature>
<feature type="topological domain" description="Mitochondrial matrix" evidence="1">
    <location>
        <begin position="1"/>
        <end position="13"/>
    </location>
</feature>
<feature type="transmembrane region" description="Helical" evidence="1">
    <location>
        <begin position="14"/>
        <end position="54"/>
    </location>
</feature>
<feature type="topological domain" description="Mitochondrial intermembrane" evidence="1">
    <location>
        <begin position="55"/>
        <end position="75"/>
    </location>
</feature>
<reference key="1">
    <citation type="submission" date="2003-02" db="EMBL/GenBank/DDBJ databases">
        <title>Co-evolution in cytochrome c oxidase: 9 of 13 subunits show accelerated rates of nonsynonymous substitution in anthropoid primates.</title>
        <authorList>
            <person name="Doan J.W."/>
            <person name="Schmidt T.R."/>
            <person name="Wildman D.E."/>
            <person name="Goldberg A."/>
            <person name="Huttemann M."/>
            <person name="Goodman M."/>
            <person name="Weiss M.L."/>
            <person name="Grossman L.I."/>
        </authorList>
    </citation>
    <scope>NUCLEOTIDE SEQUENCE [MRNA]</scope>
</reference>
<reference key="2">
    <citation type="journal article" date="2005" name="Proc. Natl. Acad. Sci. U.S.A.">
        <title>Rapid electrostatic evolution at the binding site for cytochrome c on cytochrome c oxidase in anthropoid primates.</title>
        <authorList>
            <person name="Schmidt T.R."/>
            <person name="Wildman D.E."/>
            <person name="Uddin M."/>
            <person name="Opazo J.C."/>
            <person name="Goodman M."/>
            <person name="Grossman L.I."/>
        </authorList>
    </citation>
    <scope>NUCLEOTIDE SEQUENCE [MRNA]</scope>
</reference>
<gene>
    <name type="primary">COX6C</name>
</gene>